<protein>
    <recommendedName>
        <fullName evidence="1">Acetate kinase 2</fullName>
        <ecNumber evidence="1">2.7.2.1</ecNumber>
    </recommendedName>
    <alternativeName>
        <fullName evidence="1">Acetokinase 2</fullName>
    </alternativeName>
</protein>
<gene>
    <name evidence="1" type="primary">ackA2</name>
    <name type="ordered locus">LL2012</name>
    <name type="ORF">L0224</name>
</gene>
<feature type="chain" id="PRO_0000107570" description="Acetate kinase 2">
    <location>
        <begin position="1"/>
        <end position="395"/>
    </location>
</feature>
<feature type="active site" description="Proton donor/acceptor" evidence="1">
    <location>
        <position position="146"/>
    </location>
</feature>
<feature type="binding site" evidence="1">
    <location>
        <position position="8"/>
    </location>
    <ligand>
        <name>Mg(2+)</name>
        <dbReference type="ChEBI" id="CHEBI:18420"/>
    </ligand>
</feature>
<feature type="binding site" evidence="1">
    <location>
        <position position="15"/>
    </location>
    <ligand>
        <name>ATP</name>
        <dbReference type="ChEBI" id="CHEBI:30616"/>
    </ligand>
</feature>
<feature type="binding site" evidence="1">
    <location>
        <position position="89"/>
    </location>
    <ligand>
        <name>substrate</name>
    </ligand>
</feature>
<feature type="binding site" evidence="1">
    <location>
        <begin position="206"/>
        <end position="210"/>
    </location>
    <ligand>
        <name>ATP</name>
        <dbReference type="ChEBI" id="CHEBI:30616"/>
    </ligand>
</feature>
<feature type="binding site" evidence="1">
    <location>
        <begin position="283"/>
        <end position="285"/>
    </location>
    <ligand>
        <name>ATP</name>
        <dbReference type="ChEBI" id="CHEBI:30616"/>
    </ligand>
</feature>
<feature type="binding site" evidence="1">
    <location>
        <begin position="331"/>
        <end position="335"/>
    </location>
    <ligand>
        <name>ATP</name>
        <dbReference type="ChEBI" id="CHEBI:30616"/>
    </ligand>
</feature>
<feature type="binding site" evidence="1">
    <location>
        <position position="383"/>
    </location>
    <ligand>
        <name>Mg(2+)</name>
        <dbReference type="ChEBI" id="CHEBI:18420"/>
    </ligand>
</feature>
<feature type="site" description="Transition state stabilizer" evidence="1">
    <location>
        <position position="178"/>
    </location>
</feature>
<feature type="site" description="Transition state stabilizer" evidence="1">
    <location>
        <position position="239"/>
    </location>
</feature>
<keyword id="KW-0067">ATP-binding</keyword>
<keyword id="KW-0963">Cytoplasm</keyword>
<keyword id="KW-0418">Kinase</keyword>
<keyword id="KW-0460">Magnesium</keyword>
<keyword id="KW-0479">Metal-binding</keyword>
<keyword id="KW-0547">Nucleotide-binding</keyword>
<keyword id="KW-1185">Reference proteome</keyword>
<keyword id="KW-0808">Transferase</keyword>
<dbReference type="EC" id="2.7.2.1" evidence="1"/>
<dbReference type="EMBL" id="AE005176">
    <property type="protein sequence ID" value="AAK06110.1"/>
    <property type="molecule type" value="Genomic_DNA"/>
</dbReference>
<dbReference type="PIR" id="D86876">
    <property type="entry name" value="D86876"/>
</dbReference>
<dbReference type="RefSeq" id="NP_268169.1">
    <property type="nucleotide sequence ID" value="NC_002662.1"/>
</dbReference>
<dbReference type="RefSeq" id="WP_010906264.1">
    <property type="nucleotide sequence ID" value="NC_002662.1"/>
</dbReference>
<dbReference type="SMR" id="Q9CE36"/>
<dbReference type="PaxDb" id="272623-L0224"/>
<dbReference type="EnsemblBacteria" id="AAK06110">
    <property type="protein sequence ID" value="AAK06110"/>
    <property type="gene ID" value="L0224"/>
</dbReference>
<dbReference type="KEGG" id="lla:L0224"/>
<dbReference type="PATRIC" id="fig|272623.7.peg.2167"/>
<dbReference type="eggNOG" id="COG0282">
    <property type="taxonomic scope" value="Bacteria"/>
</dbReference>
<dbReference type="HOGENOM" id="CLU_020352_0_1_9"/>
<dbReference type="OrthoDB" id="9802453at2"/>
<dbReference type="UniPathway" id="UPA00340">
    <property type="reaction ID" value="UER00458"/>
</dbReference>
<dbReference type="Proteomes" id="UP000002196">
    <property type="component" value="Chromosome"/>
</dbReference>
<dbReference type="GO" id="GO:0005737">
    <property type="term" value="C:cytoplasm"/>
    <property type="evidence" value="ECO:0007669"/>
    <property type="project" value="UniProtKB-SubCell"/>
</dbReference>
<dbReference type="GO" id="GO:0008776">
    <property type="term" value="F:acetate kinase activity"/>
    <property type="evidence" value="ECO:0007669"/>
    <property type="project" value="UniProtKB-UniRule"/>
</dbReference>
<dbReference type="GO" id="GO:0005524">
    <property type="term" value="F:ATP binding"/>
    <property type="evidence" value="ECO:0007669"/>
    <property type="project" value="UniProtKB-KW"/>
</dbReference>
<dbReference type="GO" id="GO:0000287">
    <property type="term" value="F:magnesium ion binding"/>
    <property type="evidence" value="ECO:0007669"/>
    <property type="project" value="UniProtKB-UniRule"/>
</dbReference>
<dbReference type="GO" id="GO:0006083">
    <property type="term" value="P:acetate metabolic process"/>
    <property type="evidence" value="ECO:0007669"/>
    <property type="project" value="TreeGrafter"/>
</dbReference>
<dbReference type="GO" id="GO:0006085">
    <property type="term" value="P:acetyl-CoA biosynthetic process"/>
    <property type="evidence" value="ECO:0007669"/>
    <property type="project" value="UniProtKB-UniRule"/>
</dbReference>
<dbReference type="CDD" id="cd24010">
    <property type="entry name" value="ASKHA_NBD_AcK_PK"/>
    <property type="match status" value="1"/>
</dbReference>
<dbReference type="Gene3D" id="3.30.420.40">
    <property type="match status" value="2"/>
</dbReference>
<dbReference type="HAMAP" id="MF_00020">
    <property type="entry name" value="Acetate_kinase"/>
    <property type="match status" value="1"/>
</dbReference>
<dbReference type="InterPro" id="IPR004372">
    <property type="entry name" value="Ac/propionate_kinase"/>
</dbReference>
<dbReference type="InterPro" id="IPR000890">
    <property type="entry name" value="Aliphatic_acid_kin_short-chain"/>
</dbReference>
<dbReference type="InterPro" id="IPR023865">
    <property type="entry name" value="Aliphatic_acid_kinase_CS"/>
</dbReference>
<dbReference type="InterPro" id="IPR043129">
    <property type="entry name" value="ATPase_NBD"/>
</dbReference>
<dbReference type="NCBIfam" id="TIGR00016">
    <property type="entry name" value="ackA"/>
    <property type="match status" value="1"/>
</dbReference>
<dbReference type="PANTHER" id="PTHR21060">
    <property type="entry name" value="ACETATE KINASE"/>
    <property type="match status" value="1"/>
</dbReference>
<dbReference type="PANTHER" id="PTHR21060:SF15">
    <property type="entry name" value="ACETATE KINASE-RELATED"/>
    <property type="match status" value="1"/>
</dbReference>
<dbReference type="Pfam" id="PF00871">
    <property type="entry name" value="Acetate_kinase"/>
    <property type="match status" value="1"/>
</dbReference>
<dbReference type="PIRSF" id="PIRSF000722">
    <property type="entry name" value="Acetate_prop_kin"/>
    <property type="match status" value="1"/>
</dbReference>
<dbReference type="PRINTS" id="PR00471">
    <property type="entry name" value="ACETATEKNASE"/>
</dbReference>
<dbReference type="SUPFAM" id="SSF53067">
    <property type="entry name" value="Actin-like ATPase domain"/>
    <property type="match status" value="2"/>
</dbReference>
<dbReference type="PROSITE" id="PS01075">
    <property type="entry name" value="ACETATE_KINASE_1"/>
    <property type="match status" value="1"/>
</dbReference>
<dbReference type="PROSITE" id="PS01076">
    <property type="entry name" value="ACETATE_KINASE_2"/>
    <property type="match status" value="1"/>
</dbReference>
<accession>Q9CE36</accession>
<organism>
    <name type="scientific">Lactococcus lactis subsp. lactis (strain IL1403)</name>
    <name type="common">Streptococcus lactis</name>
    <dbReference type="NCBI Taxonomy" id="272623"/>
    <lineage>
        <taxon>Bacteria</taxon>
        <taxon>Bacillati</taxon>
        <taxon>Bacillota</taxon>
        <taxon>Bacilli</taxon>
        <taxon>Lactobacillales</taxon>
        <taxon>Streptococcaceae</taxon>
        <taxon>Lactococcus</taxon>
    </lineage>
</organism>
<evidence type="ECO:0000255" key="1">
    <source>
        <dbReference type="HAMAP-Rule" id="MF_00020"/>
    </source>
</evidence>
<name>ACKA2_LACLA</name>
<reference key="1">
    <citation type="journal article" date="2001" name="Genome Res.">
        <title>The complete genome sequence of the lactic acid bacterium Lactococcus lactis ssp. lactis IL1403.</title>
        <authorList>
            <person name="Bolotin A."/>
            <person name="Wincker P."/>
            <person name="Mauger S."/>
            <person name="Jaillon O."/>
            <person name="Malarme K."/>
            <person name="Weissenbach J."/>
            <person name="Ehrlich S.D."/>
            <person name="Sorokin A."/>
        </authorList>
    </citation>
    <scope>NUCLEOTIDE SEQUENCE [LARGE SCALE GENOMIC DNA]</scope>
    <source>
        <strain>IL1403</strain>
    </source>
</reference>
<proteinExistence type="inferred from homology"/>
<comment type="function">
    <text evidence="1">Catalyzes the formation of acetyl phosphate from acetate and ATP. Can also catalyze the reverse reaction.</text>
</comment>
<comment type="catalytic activity">
    <reaction evidence="1">
        <text>acetate + ATP = acetyl phosphate + ADP</text>
        <dbReference type="Rhea" id="RHEA:11352"/>
        <dbReference type="ChEBI" id="CHEBI:22191"/>
        <dbReference type="ChEBI" id="CHEBI:30089"/>
        <dbReference type="ChEBI" id="CHEBI:30616"/>
        <dbReference type="ChEBI" id="CHEBI:456216"/>
        <dbReference type="EC" id="2.7.2.1"/>
    </reaction>
</comment>
<comment type="cofactor">
    <cofactor evidence="1">
        <name>Mg(2+)</name>
        <dbReference type="ChEBI" id="CHEBI:18420"/>
    </cofactor>
    <cofactor evidence="1">
        <name>Mn(2+)</name>
        <dbReference type="ChEBI" id="CHEBI:29035"/>
    </cofactor>
    <text evidence="1">Mg(2+). Can also accept Mn(2+).</text>
</comment>
<comment type="pathway">
    <text evidence="1">Metabolic intermediate biosynthesis; acetyl-CoA biosynthesis; acetyl-CoA from acetate: step 1/2.</text>
</comment>
<comment type="subunit">
    <text evidence="1">Homodimer.</text>
</comment>
<comment type="subcellular location">
    <subcellularLocation>
        <location evidence="1">Cytoplasm</location>
    </subcellularLocation>
</comment>
<comment type="similarity">
    <text evidence="1">Belongs to the acetokinase family.</text>
</comment>
<sequence>MEKTLAVNAGSSSLKWQLYEMPEETVIAKGIFERIGLSGSISTTKFNNEEHFRKQEIVDHRQAVLLLMDELIHFKLIHEFREITGIGHRVVAGGEFFKTSTVISPEVLAEIKNLSTLAPLHNPANVLGIEAFQRLLPDALAVAVFDTAFHSTLPEKAYRYPIPTKYYEDYSIRKYGAHGTSHMYVAQEAEKVLGKPLEDLKLITAHIGNGASITAIEAGKSVDTSMGFTPLAGVMMGTRAGEMDASVIPYMLESDPSLRNAQDVIDILNKDSGVLGVSELSSDMRDLSEAVAKGNPKAILAYEMYVDRLKKFIAQYFGVLNGADALIFTAGVGENDTAVRTDVVNGLSWFGMEIDESKNVRGAFGIISKPESKVKVLVVPTNEELVIARDVEAAK</sequence>